<name>UVRC_SHEDO</name>
<comment type="function">
    <text evidence="1">The UvrABC repair system catalyzes the recognition and processing of DNA lesions. UvrC both incises the 5' and 3' sides of the lesion. The N-terminal half is responsible for the 3' incision and the C-terminal half is responsible for the 5' incision.</text>
</comment>
<comment type="subunit">
    <text evidence="1">Interacts with UvrB in an incision complex.</text>
</comment>
<comment type="subcellular location">
    <subcellularLocation>
        <location evidence="1">Cytoplasm</location>
    </subcellularLocation>
</comment>
<comment type="similarity">
    <text evidence="1">Belongs to the UvrC family.</text>
</comment>
<sequence>MASFNATEFLKNLSSSAGVYRMYDAKGEVIYVGKAKDLKKRLSSYFRANLGNIKTQALVSHITNIDVTLTHSETDALLLENDYIKQYMPKYNVLLRDDKSYPYLFLSGHKHPRLAYHRGPQREKGRYFGPYPNGGAVRESLNLLQKLFPIRQCDDLYYKARTRPCLQYQLGRCSAPCVNKVTDEDYAEQVQLASLFLQGKDQQVVTNLVTKMEQAAEEFHYEQAAAYRDQITALRKVAEQQEVSLDKGDMDVIGVHYEKAIACFHMLFIRSGKIFGSRSYYPSVPAQTDIDEVLSAFISQFYLNADVQRTLPNEVILSQSFSDKAELESAIAEALEKKFIIKTQVRGERASFLRLALTNATNAVTTRLADKNTQEQRFSLLEEALELGHSIGRMECFDISHTMGESTVASCVVFNREGPHKADYRRYNISGITGGDDYAAMEQAINRRFDKIDTNGKVPDIVFIDGGLGQLRIAQGIVDEKCAHLDRPPLLIGVTKGEGRKAGLETFVFGGSEQQFNLPSDSGAFHLILHIRDESHRFAITGHRNKRQKTRNTSSLESIAGVGPKRRKALLQHLGGLQEVKGASVAELTKVPGISLEMAQTIHDALRGG</sequence>
<dbReference type="EMBL" id="CP000302">
    <property type="protein sequence ID" value="ABE54723.1"/>
    <property type="molecule type" value="Genomic_DNA"/>
</dbReference>
<dbReference type="RefSeq" id="WP_011495881.1">
    <property type="nucleotide sequence ID" value="NC_007954.1"/>
</dbReference>
<dbReference type="SMR" id="Q12PA3"/>
<dbReference type="STRING" id="318161.Sden_1437"/>
<dbReference type="KEGG" id="sdn:Sden_1437"/>
<dbReference type="eggNOG" id="COG0322">
    <property type="taxonomic scope" value="Bacteria"/>
</dbReference>
<dbReference type="HOGENOM" id="CLU_014841_3_0_6"/>
<dbReference type="OrthoDB" id="9804933at2"/>
<dbReference type="Proteomes" id="UP000001982">
    <property type="component" value="Chromosome"/>
</dbReference>
<dbReference type="GO" id="GO:0005737">
    <property type="term" value="C:cytoplasm"/>
    <property type="evidence" value="ECO:0007669"/>
    <property type="project" value="UniProtKB-SubCell"/>
</dbReference>
<dbReference type="GO" id="GO:0009380">
    <property type="term" value="C:excinuclease repair complex"/>
    <property type="evidence" value="ECO:0007669"/>
    <property type="project" value="InterPro"/>
</dbReference>
<dbReference type="GO" id="GO:0003677">
    <property type="term" value="F:DNA binding"/>
    <property type="evidence" value="ECO:0007669"/>
    <property type="project" value="UniProtKB-UniRule"/>
</dbReference>
<dbReference type="GO" id="GO:0009381">
    <property type="term" value="F:excinuclease ABC activity"/>
    <property type="evidence" value="ECO:0007669"/>
    <property type="project" value="UniProtKB-UniRule"/>
</dbReference>
<dbReference type="GO" id="GO:0006289">
    <property type="term" value="P:nucleotide-excision repair"/>
    <property type="evidence" value="ECO:0007669"/>
    <property type="project" value="UniProtKB-UniRule"/>
</dbReference>
<dbReference type="GO" id="GO:0009432">
    <property type="term" value="P:SOS response"/>
    <property type="evidence" value="ECO:0007669"/>
    <property type="project" value="UniProtKB-UniRule"/>
</dbReference>
<dbReference type="CDD" id="cd10434">
    <property type="entry name" value="GIY-YIG_UvrC_Cho"/>
    <property type="match status" value="1"/>
</dbReference>
<dbReference type="FunFam" id="1.10.150.20:FF:000005">
    <property type="entry name" value="UvrABC system protein C"/>
    <property type="match status" value="1"/>
</dbReference>
<dbReference type="FunFam" id="3.30.420.340:FF:000001">
    <property type="entry name" value="UvrABC system protein C"/>
    <property type="match status" value="1"/>
</dbReference>
<dbReference type="FunFam" id="3.40.1440.10:FF:000001">
    <property type="entry name" value="UvrABC system protein C"/>
    <property type="match status" value="1"/>
</dbReference>
<dbReference type="Gene3D" id="1.10.150.20">
    <property type="entry name" value="5' to 3' exonuclease, C-terminal subdomain"/>
    <property type="match status" value="1"/>
</dbReference>
<dbReference type="Gene3D" id="3.40.1440.10">
    <property type="entry name" value="GIY-YIG endonuclease"/>
    <property type="match status" value="1"/>
</dbReference>
<dbReference type="Gene3D" id="4.10.860.10">
    <property type="entry name" value="UVR domain"/>
    <property type="match status" value="1"/>
</dbReference>
<dbReference type="Gene3D" id="3.30.420.340">
    <property type="entry name" value="UvrC, RNAse H endonuclease domain"/>
    <property type="match status" value="1"/>
</dbReference>
<dbReference type="HAMAP" id="MF_00203">
    <property type="entry name" value="UvrC"/>
    <property type="match status" value="1"/>
</dbReference>
<dbReference type="InterPro" id="IPR000305">
    <property type="entry name" value="GIY-YIG_endonuc"/>
</dbReference>
<dbReference type="InterPro" id="IPR035901">
    <property type="entry name" value="GIY-YIG_endonuc_sf"/>
</dbReference>
<dbReference type="InterPro" id="IPR047296">
    <property type="entry name" value="GIY-YIG_UvrC_Cho"/>
</dbReference>
<dbReference type="InterPro" id="IPR003583">
    <property type="entry name" value="Hlx-hairpin-Hlx_DNA-bd_motif"/>
</dbReference>
<dbReference type="InterPro" id="IPR010994">
    <property type="entry name" value="RuvA_2-like"/>
</dbReference>
<dbReference type="InterPro" id="IPR001943">
    <property type="entry name" value="UVR_dom"/>
</dbReference>
<dbReference type="InterPro" id="IPR036876">
    <property type="entry name" value="UVR_dom_sf"/>
</dbReference>
<dbReference type="InterPro" id="IPR050066">
    <property type="entry name" value="UvrABC_protein_C"/>
</dbReference>
<dbReference type="InterPro" id="IPR004791">
    <property type="entry name" value="UvrC"/>
</dbReference>
<dbReference type="InterPro" id="IPR001162">
    <property type="entry name" value="UvrC_RNase_H_dom"/>
</dbReference>
<dbReference type="InterPro" id="IPR038476">
    <property type="entry name" value="UvrC_RNase_H_dom_sf"/>
</dbReference>
<dbReference type="NCBIfam" id="NF001824">
    <property type="entry name" value="PRK00558.1-5"/>
    <property type="match status" value="1"/>
</dbReference>
<dbReference type="NCBIfam" id="TIGR00194">
    <property type="entry name" value="uvrC"/>
    <property type="match status" value="1"/>
</dbReference>
<dbReference type="PANTHER" id="PTHR30562:SF1">
    <property type="entry name" value="UVRABC SYSTEM PROTEIN C"/>
    <property type="match status" value="1"/>
</dbReference>
<dbReference type="PANTHER" id="PTHR30562">
    <property type="entry name" value="UVRC/OXIDOREDUCTASE"/>
    <property type="match status" value="1"/>
</dbReference>
<dbReference type="Pfam" id="PF01541">
    <property type="entry name" value="GIY-YIG"/>
    <property type="match status" value="1"/>
</dbReference>
<dbReference type="Pfam" id="PF14520">
    <property type="entry name" value="HHH_5"/>
    <property type="match status" value="1"/>
</dbReference>
<dbReference type="Pfam" id="PF02151">
    <property type="entry name" value="UVR"/>
    <property type="match status" value="1"/>
</dbReference>
<dbReference type="Pfam" id="PF22920">
    <property type="entry name" value="UvrC_RNaseH"/>
    <property type="match status" value="1"/>
</dbReference>
<dbReference type="Pfam" id="PF08459">
    <property type="entry name" value="UvrC_RNaseH_dom"/>
    <property type="match status" value="1"/>
</dbReference>
<dbReference type="SMART" id="SM00465">
    <property type="entry name" value="GIYc"/>
    <property type="match status" value="1"/>
</dbReference>
<dbReference type="SMART" id="SM00278">
    <property type="entry name" value="HhH1"/>
    <property type="match status" value="2"/>
</dbReference>
<dbReference type="SUPFAM" id="SSF46600">
    <property type="entry name" value="C-terminal UvrC-binding domain of UvrB"/>
    <property type="match status" value="1"/>
</dbReference>
<dbReference type="SUPFAM" id="SSF82771">
    <property type="entry name" value="GIY-YIG endonuclease"/>
    <property type="match status" value="1"/>
</dbReference>
<dbReference type="SUPFAM" id="SSF47781">
    <property type="entry name" value="RuvA domain 2-like"/>
    <property type="match status" value="1"/>
</dbReference>
<dbReference type="PROSITE" id="PS50164">
    <property type="entry name" value="GIY_YIG"/>
    <property type="match status" value="1"/>
</dbReference>
<dbReference type="PROSITE" id="PS50151">
    <property type="entry name" value="UVR"/>
    <property type="match status" value="1"/>
</dbReference>
<dbReference type="PROSITE" id="PS50165">
    <property type="entry name" value="UVRC"/>
    <property type="match status" value="1"/>
</dbReference>
<protein>
    <recommendedName>
        <fullName evidence="1">UvrABC system protein C</fullName>
        <shortName evidence="1">Protein UvrC</shortName>
    </recommendedName>
    <alternativeName>
        <fullName evidence="1">Excinuclease ABC subunit C</fullName>
    </alternativeName>
</protein>
<feature type="chain" id="PRO_0000264945" description="UvrABC system protein C">
    <location>
        <begin position="1"/>
        <end position="609"/>
    </location>
</feature>
<feature type="domain" description="GIY-YIG" evidence="1">
    <location>
        <begin position="15"/>
        <end position="93"/>
    </location>
</feature>
<feature type="domain" description="UVR" evidence="1">
    <location>
        <begin position="202"/>
        <end position="237"/>
    </location>
</feature>
<proteinExistence type="inferred from homology"/>
<gene>
    <name evidence="1" type="primary">uvrC</name>
    <name type="ordered locus">Sden_1437</name>
</gene>
<keyword id="KW-0963">Cytoplasm</keyword>
<keyword id="KW-0227">DNA damage</keyword>
<keyword id="KW-0228">DNA excision</keyword>
<keyword id="KW-0234">DNA repair</keyword>
<keyword id="KW-0267">Excision nuclease</keyword>
<keyword id="KW-1185">Reference proteome</keyword>
<keyword id="KW-0742">SOS response</keyword>
<accession>Q12PA3</accession>
<organism>
    <name type="scientific">Shewanella denitrificans (strain OS217 / ATCC BAA-1090 / DSM 15013)</name>
    <dbReference type="NCBI Taxonomy" id="318161"/>
    <lineage>
        <taxon>Bacteria</taxon>
        <taxon>Pseudomonadati</taxon>
        <taxon>Pseudomonadota</taxon>
        <taxon>Gammaproteobacteria</taxon>
        <taxon>Alteromonadales</taxon>
        <taxon>Shewanellaceae</taxon>
        <taxon>Shewanella</taxon>
    </lineage>
</organism>
<evidence type="ECO:0000255" key="1">
    <source>
        <dbReference type="HAMAP-Rule" id="MF_00203"/>
    </source>
</evidence>
<reference key="1">
    <citation type="submission" date="2006-03" db="EMBL/GenBank/DDBJ databases">
        <title>Complete sequence of Shewanella denitrificans OS217.</title>
        <authorList>
            <consortium name="US DOE Joint Genome Institute"/>
            <person name="Copeland A."/>
            <person name="Lucas S."/>
            <person name="Lapidus A."/>
            <person name="Barry K."/>
            <person name="Detter J.C."/>
            <person name="Glavina del Rio T."/>
            <person name="Hammon N."/>
            <person name="Israni S."/>
            <person name="Dalin E."/>
            <person name="Tice H."/>
            <person name="Pitluck S."/>
            <person name="Brettin T."/>
            <person name="Bruce D."/>
            <person name="Han C."/>
            <person name="Tapia R."/>
            <person name="Gilna P."/>
            <person name="Kiss H."/>
            <person name="Schmutz J."/>
            <person name="Larimer F."/>
            <person name="Land M."/>
            <person name="Hauser L."/>
            <person name="Kyrpides N."/>
            <person name="Lykidis A."/>
            <person name="Richardson P."/>
        </authorList>
    </citation>
    <scope>NUCLEOTIDE SEQUENCE [LARGE SCALE GENOMIC DNA]</scope>
    <source>
        <strain>OS217 / ATCC BAA-1090 / DSM 15013</strain>
    </source>
</reference>